<gene>
    <name type="primary">psaA</name>
    <name type="ordered locus">tlr0731</name>
</gene>
<comment type="function">
    <text evidence="1 2 3 4">PsaA and PsaB bind P700, the primary electron donor of photosystem I (PSI), as well as the electron acceptors A0, A1 and FX. PSI is a plastocyanin/cytochrome c6-ferredoxin oxidoreductase, converting photonic excitation into a charge separation, which transfers an electron from the donor P700 chlorophyll pair to the spectroscopically characterized acceptors A0, A1, FX, FA and FB in turn. Oxidized P700 is reduced on the lumenal side of the thylakoid membrane by plastocyanin or cytochrome c6.</text>
</comment>
<comment type="catalytic activity">
    <reaction evidence="1 2 3 4">
        <text>reduced [plastocyanin] + hnu + oxidized [2Fe-2S]-[ferredoxin] = oxidized [plastocyanin] + reduced [2Fe-2S]-[ferredoxin]</text>
        <dbReference type="Rhea" id="RHEA:30407"/>
        <dbReference type="Rhea" id="RHEA-COMP:10000"/>
        <dbReference type="Rhea" id="RHEA-COMP:10001"/>
        <dbReference type="Rhea" id="RHEA-COMP:10039"/>
        <dbReference type="Rhea" id="RHEA-COMP:10040"/>
        <dbReference type="ChEBI" id="CHEBI:29036"/>
        <dbReference type="ChEBI" id="CHEBI:30212"/>
        <dbReference type="ChEBI" id="CHEBI:33737"/>
        <dbReference type="ChEBI" id="CHEBI:33738"/>
        <dbReference type="ChEBI" id="CHEBI:49552"/>
        <dbReference type="EC" id="1.97.1.12"/>
    </reaction>
</comment>
<comment type="cofactor">
    <text evidence="1 2 3 4">PSI electron transfer chain: 5 chlorophyll a, 1 chlorophyll a', 2 phylloquinones and 3 4Fe-4S clusters. PSI core antenna: 90 chlorophyll a, 22 carotenoids, 3 phospholipids and 1 galactolipid. P700 is a chlorophyll a/chlorophyll a' dimer, A0 is one or more chlorophyll a, A1 is one or both phylloquinones and FX is a shared 4Fe-4S iron-sulfur center.</text>
</comment>
<comment type="subunit">
    <text evidence="1 2 3 4">The PsaA/B heterodimer binds the P700 chlorophyll special pair and subsequent electron acceptors. PSI consists of a core antenna complex that captures photons, and an electron transfer chain that converts photonic excitation into a charge separation. The cyanobacterial PSI reaction center is composed of one copy each of PsaA,B,C,D,E,F,I,J,K,L,M and X, and forms trimeric complexes.</text>
</comment>
<comment type="subcellular location">
    <subcellularLocation>
        <location evidence="1 2 3 4">Cellular thylakoid membrane</location>
        <topology evidence="1 2 3 4">Multi-pass membrane protein</topology>
    </subcellularLocation>
</comment>
<comment type="similarity">
    <text evidence="5">Belongs to the PsaA/PsaB family.</text>
</comment>
<comment type="sequence caution" evidence="5">
    <conflict type="erroneous initiation">
        <sequence resource="EMBL-CDS" id="BAC08282"/>
    </conflict>
    <text>Extended N-terminus.</text>
</comment>
<sequence>MTISPPEREPKVRVVVDNDPVPTSFEKWAKPGHFDRTLARGPQTTTWIWNLHALAHDFDTHTSDLEDISRKIFSAHFGHLAVVFIWLSGMYFHGAKFSNYEAWLADPTGIKPSAQVVWPIVGQGILNGDVGGGFHGIQITSGLFQLWRASGITNEFQLYCTAIGGLVMAGLMLFAGWFHYHKRAPKLEWFQNVESMLNHHLAGLLGLGSLAWAGHQIHVSLPINKLLDAGVAAKDIPLPHEFILNPSLMAELYPKVDWGFFSGVIPFFTFNWAAYSDFLTFNGGLNPVTGGLWLSDTAHHHLAIAVLFIIAGHMYRTNWGIGHSLKEILEAHKGPFTGAGHKGLYEVLTTSWHAQLAINLAMMGSLSIIVAQHMYAMPPYPYLATDYPTQLSLFTHHMWIGGFLVVGGAAHGAIFMVRDYDPAMNQNNVLDRVLRHRDAIISHLNWVCIFLGFHSFGLYVHNDTMRAFGRPQDMFSDTGIQLQPVFAQWVQNLHTLAPGGTAPNAAATASVAFGGDVVAVGGKVAMMPIVLGTADFMVHHIHAFTIHVTVLILLKGVLFARSSRLIPDKANLGFRFPCDGPGRGGTCQVSGWDHVFLGLFWMYNCISVVIFHFSWKMQSDVWGTVAPDGTVSHITGGNFAQSAITINGWLRDFLWAQASQVIGSYGSALSAYGLLFLGAHFIWAFSLMFLFSGRGYWQELIESIVWAHNKLKVAPAIQPRALSIIQGRAVGVAHYLLGGIATTWAFFLARIISVG</sequence>
<feature type="chain" id="PRO_0000088591" description="Photosystem I P700 chlorophyll a apoprotein A1">
    <location>
        <begin position="1"/>
        <end position="755"/>
    </location>
</feature>
<feature type="topological domain" description="Cytoplasmic" evidence="5">
    <location>
        <begin position="1"/>
        <end position="64"/>
    </location>
</feature>
<feature type="transmembrane region" description="Helical; Name=I">
    <location>
        <begin position="65"/>
        <end position="96"/>
    </location>
</feature>
<feature type="topological domain" description="Lumenal, thylakoid" evidence="5">
    <location>
        <begin position="97"/>
        <end position="155"/>
    </location>
</feature>
<feature type="transmembrane region" description="Helical; Name=II">
    <location>
        <begin position="156"/>
        <end position="179"/>
    </location>
</feature>
<feature type="topological domain" description="Cytoplasmic" evidence="5">
    <location>
        <begin position="180"/>
        <end position="192"/>
    </location>
</feature>
<feature type="transmembrane region" description="Helical; Name=III">
    <location>
        <begin position="193"/>
        <end position="217"/>
    </location>
</feature>
<feature type="topological domain" description="Lumenal, thylakoid" evidence="5">
    <location>
        <begin position="218"/>
        <end position="293"/>
    </location>
</feature>
<feature type="transmembrane region" description="Helical; Name=IV">
    <location>
        <begin position="294"/>
        <end position="311"/>
    </location>
</feature>
<feature type="topological domain" description="Cytoplasmic" evidence="5">
    <location>
        <begin position="312"/>
        <end position="352"/>
    </location>
</feature>
<feature type="transmembrane region" description="Helical; Name=V">
    <location>
        <begin position="353"/>
        <end position="376"/>
    </location>
</feature>
<feature type="topological domain" description="Lumenal, thylakoid" evidence="5">
    <location>
        <begin position="377"/>
        <end position="386"/>
    </location>
</feature>
<feature type="transmembrane region" description="Helical; Name=VI">
    <location>
        <begin position="387"/>
        <end position="418"/>
    </location>
</feature>
<feature type="topological domain" description="Cytoplasmic" evidence="5">
    <location>
        <begin position="419"/>
        <end position="436"/>
    </location>
</feature>
<feature type="transmembrane region" description="Helical; Name=VII">
    <location>
        <begin position="437"/>
        <end position="468"/>
    </location>
</feature>
<feature type="topological domain" description="Lumenal, thylakoid" evidence="5">
    <location>
        <begin position="469"/>
        <end position="532"/>
    </location>
</feature>
<feature type="transmembrane region" description="Helical; Name=VIII">
    <location>
        <begin position="533"/>
        <end position="558"/>
    </location>
</feature>
<feature type="topological domain" description="Cytoplasmic" evidence="5">
    <location>
        <begin position="559"/>
        <end position="590"/>
    </location>
</feature>
<feature type="transmembrane region" description="Helical; Name=IX">
    <location>
        <begin position="591"/>
        <end position="619"/>
    </location>
</feature>
<feature type="topological domain" description="Lumenal, thylakoid" evidence="5">
    <location>
        <begin position="620"/>
        <end position="668"/>
    </location>
</feature>
<feature type="transmembrane region" description="Helical; Name=X">
    <location>
        <begin position="669"/>
        <end position="690"/>
    </location>
</feature>
<feature type="topological domain" description="Cytoplasmic" evidence="5">
    <location>
        <begin position="691"/>
        <end position="723"/>
    </location>
</feature>
<feature type="transmembrane region" description="Helical; Name=XI">
    <location>
        <begin position="724"/>
        <end position="753"/>
    </location>
</feature>
<feature type="binding site" evidence="3">
    <location>
        <position position="578"/>
    </location>
    <ligand>
        <name>[4Fe-4S] cluster</name>
        <dbReference type="ChEBI" id="CHEBI:49883"/>
        <note>ligand shared between dimeric partners</note>
    </ligand>
</feature>
<feature type="binding site" evidence="3">
    <location>
        <position position="587"/>
    </location>
    <ligand>
        <name>[4Fe-4S] cluster</name>
        <dbReference type="ChEBI" id="CHEBI:49883"/>
        <note>ligand shared between dimeric partners</note>
    </ligand>
</feature>
<feature type="binding site" description="axial binding residue" evidence="3">
    <location>
        <position position="680"/>
    </location>
    <ligand>
        <name>chlorophyll a'</name>
        <dbReference type="ChEBI" id="CHEBI:189419"/>
        <label>A1</label>
    </ligand>
    <ligandPart>
        <name>Mg</name>
        <dbReference type="ChEBI" id="CHEBI:25107"/>
    </ligandPart>
</feature>
<feature type="binding site" description="axial binding residue" evidence="3">
    <location>
        <position position="688"/>
    </location>
    <ligand>
        <name>chlorophyll a</name>
        <dbReference type="ChEBI" id="CHEBI:58416"/>
        <label>A3</label>
    </ligand>
    <ligandPart>
        <name>Mg</name>
        <dbReference type="ChEBI" id="CHEBI:25107"/>
    </ligandPart>
</feature>
<feature type="binding site" evidence="2 3">
    <location>
        <position position="696"/>
    </location>
    <ligand>
        <name>chlorophyll a</name>
        <dbReference type="ChEBI" id="CHEBI:58416"/>
        <label>A3</label>
    </ligand>
</feature>
<feature type="binding site" evidence="2 3">
    <location>
        <position position="697"/>
    </location>
    <ligand>
        <name>phylloquinone</name>
        <dbReference type="ChEBI" id="CHEBI:18067"/>
        <label>A</label>
    </ligand>
</feature>
<feature type="strand" evidence="6">
    <location>
        <begin position="16"/>
        <end position="19"/>
    </location>
</feature>
<feature type="turn" evidence="6">
    <location>
        <begin position="25"/>
        <end position="29"/>
    </location>
</feature>
<feature type="turn" evidence="6">
    <location>
        <begin position="31"/>
        <end position="34"/>
    </location>
</feature>
<feature type="helix" evidence="6">
    <location>
        <begin position="36"/>
        <end position="38"/>
    </location>
</feature>
<feature type="strand" evidence="8">
    <location>
        <begin position="43"/>
        <end position="45"/>
    </location>
</feature>
<feature type="helix" evidence="6">
    <location>
        <begin position="46"/>
        <end position="53"/>
    </location>
</feature>
<feature type="turn" evidence="6">
    <location>
        <begin position="54"/>
        <end position="56"/>
    </location>
</feature>
<feature type="helix" evidence="6">
    <location>
        <begin position="58"/>
        <end position="60"/>
    </location>
</feature>
<feature type="helix" evidence="6">
    <location>
        <begin position="65"/>
        <end position="96"/>
    </location>
</feature>
<feature type="helix" evidence="6">
    <location>
        <begin position="100"/>
        <end position="105"/>
    </location>
</feature>
<feature type="turn" evidence="6">
    <location>
        <begin position="107"/>
        <end position="109"/>
    </location>
</feature>
<feature type="strand" evidence="9">
    <location>
        <begin position="113"/>
        <end position="115"/>
    </location>
</feature>
<feature type="strand" evidence="11">
    <location>
        <begin position="120"/>
        <end position="122"/>
    </location>
</feature>
<feature type="helix" evidence="6">
    <location>
        <begin position="123"/>
        <end position="126"/>
    </location>
</feature>
<feature type="strand" evidence="6">
    <location>
        <begin position="127"/>
        <end position="131"/>
    </location>
</feature>
<feature type="strand" evidence="6">
    <location>
        <begin position="134"/>
        <end position="138"/>
    </location>
</feature>
<feature type="helix" evidence="6">
    <location>
        <begin position="143"/>
        <end position="149"/>
    </location>
</feature>
<feature type="helix" evidence="6">
    <location>
        <begin position="155"/>
        <end position="181"/>
    </location>
</feature>
<feature type="strand" evidence="6">
    <location>
        <begin position="183"/>
        <end position="185"/>
    </location>
</feature>
<feature type="helix" evidence="6">
    <location>
        <begin position="187"/>
        <end position="190"/>
    </location>
</feature>
<feature type="helix" evidence="6">
    <location>
        <begin position="193"/>
        <end position="202"/>
    </location>
</feature>
<feature type="helix" evidence="6">
    <location>
        <begin position="204"/>
        <end position="218"/>
    </location>
</feature>
<feature type="helix" evidence="6">
    <location>
        <begin position="220"/>
        <end position="227"/>
    </location>
</feature>
<feature type="turn" evidence="6">
    <location>
        <begin position="228"/>
        <end position="230"/>
    </location>
</feature>
<feature type="turn" evidence="8">
    <location>
        <begin position="233"/>
        <end position="235"/>
    </location>
</feature>
<feature type="helix" evidence="6">
    <location>
        <begin position="241"/>
        <end position="244"/>
    </location>
</feature>
<feature type="helix" evidence="6">
    <location>
        <begin position="246"/>
        <end position="251"/>
    </location>
</feature>
<feature type="turn" evidence="8">
    <location>
        <begin position="260"/>
        <end position="262"/>
    </location>
</feature>
<feature type="turn" evidence="6">
    <location>
        <begin position="267"/>
        <end position="270"/>
    </location>
</feature>
<feature type="helix" evidence="6">
    <location>
        <begin position="272"/>
        <end position="275"/>
    </location>
</feature>
<feature type="turn" evidence="6">
    <location>
        <begin position="276"/>
        <end position="278"/>
    </location>
</feature>
<feature type="strand" evidence="12">
    <location>
        <begin position="284"/>
        <end position="286"/>
    </location>
</feature>
<feature type="turn" evidence="6">
    <location>
        <begin position="287"/>
        <end position="289"/>
    </location>
</feature>
<feature type="strand" evidence="7">
    <location>
        <begin position="290"/>
        <end position="292"/>
    </location>
</feature>
<feature type="helix" evidence="6">
    <location>
        <begin position="294"/>
        <end position="311"/>
    </location>
</feature>
<feature type="strand" evidence="6">
    <location>
        <begin position="318"/>
        <end position="320"/>
    </location>
</feature>
<feature type="helix" evidence="6">
    <location>
        <begin position="325"/>
        <end position="331"/>
    </location>
</feature>
<feature type="strand" evidence="6">
    <location>
        <begin position="335"/>
        <end position="337"/>
    </location>
</feature>
<feature type="turn" evidence="6">
    <location>
        <begin position="338"/>
        <end position="343"/>
    </location>
</feature>
<feature type="helix" evidence="6">
    <location>
        <begin position="344"/>
        <end position="350"/>
    </location>
</feature>
<feature type="helix" evidence="6">
    <location>
        <begin position="352"/>
        <end position="376"/>
    </location>
</feature>
<feature type="strand" evidence="11">
    <location>
        <begin position="380"/>
        <end position="382"/>
    </location>
</feature>
<feature type="helix" evidence="6">
    <location>
        <begin position="387"/>
        <end position="418"/>
    </location>
</feature>
<feature type="helix" evidence="6">
    <location>
        <begin position="422"/>
        <end position="425"/>
    </location>
</feature>
<feature type="strand" evidence="6">
    <location>
        <begin position="426"/>
        <end position="428"/>
    </location>
</feature>
<feature type="helix" evidence="6">
    <location>
        <begin position="429"/>
        <end position="434"/>
    </location>
</feature>
<feature type="helix" evidence="6">
    <location>
        <begin position="437"/>
        <end position="453"/>
    </location>
</feature>
<feature type="helix" evidence="6">
    <location>
        <begin position="456"/>
        <end position="468"/>
    </location>
</feature>
<feature type="helix" evidence="6">
    <location>
        <begin position="471"/>
        <end position="473"/>
    </location>
</feature>
<feature type="strand" evidence="6">
    <location>
        <begin position="474"/>
        <end position="476"/>
    </location>
</feature>
<feature type="helix" evidence="6">
    <location>
        <begin position="485"/>
        <end position="496"/>
    </location>
</feature>
<feature type="turn" evidence="6">
    <location>
        <begin position="499"/>
        <end position="501"/>
    </location>
</feature>
<feature type="strand" evidence="6">
    <location>
        <begin position="513"/>
        <end position="515"/>
    </location>
</feature>
<feature type="strand" evidence="6">
    <location>
        <begin position="518"/>
        <end position="520"/>
    </location>
</feature>
<feature type="strand" evidence="6">
    <location>
        <begin position="523"/>
        <end position="526"/>
    </location>
</feature>
<feature type="helix" evidence="6">
    <location>
        <begin position="533"/>
        <end position="558"/>
    </location>
</feature>
<feature type="strand" evidence="8">
    <location>
        <begin position="559"/>
        <end position="561"/>
    </location>
</feature>
<feature type="helix" evidence="6">
    <location>
        <begin position="569"/>
        <end position="572"/>
    </location>
</feature>
<feature type="strand" evidence="10">
    <location>
        <begin position="577"/>
        <end position="579"/>
    </location>
</feature>
<feature type="helix" evidence="11">
    <location>
        <begin position="582"/>
        <end position="584"/>
    </location>
</feature>
<feature type="helix" evidence="6">
    <location>
        <begin position="591"/>
        <end position="620"/>
    </location>
</feature>
<feature type="strand" evidence="6">
    <location>
        <begin position="623"/>
        <end position="625"/>
    </location>
</feature>
<feature type="turn" evidence="9">
    <location>
        <begin position="627"/>
        <end position="629"/>
    </location>
</feature>
<feature type="strand" evidence="6">
    <location>
        <begin position="631"/>
        <end position="633"/>
    </location>
</feature>
<feature type="turn" evidence="6">
    <location>
        <begin position="634"/>
        <end position="637"/>
    </location>
</feature>
<feature type="helix" evidence="6">
    <location>
        <begin position="639"/>
        <end position="642"/>
    </location>
</feature>
<feature type="strand" evidence="11">
    <location>
        <begin position="643"/>
        <end position="645"/>
    </location>
</feature>
<feature type="helix" evidence="6">
    <location>
        <begin position="646"/>
        <end position="651"/>
    </location>
</feature>
<feature type="helix" evidence="6">
    <location>
        <begin position="654"/>
        <end position="657"/>
    </location>
</feature>
<feature type="helix" evidence="6">
    <location>
        <begin position="659"/>
        <end position="663"/>
    </location>
</feature>
<feature type="turn" evidence="9">
    <location>
        <begin position="665"/>
        <end position="669"/>
    </location>
</feature>
<feature type="helix" evidence="6">
    <location>
        <begin position="670"/>
        <end position="691"/>
    </location>
</feature>
<feature type="helix" evidence="6">
    <location>
        <begin position="694"/>
        <end position="710"/>
    </location>
</feature>
<feature type="strand" evidence="6">
    <location>
        <begin position="716"/>
        <end position="718"/>
    </location>
</feature>
<feature type="helix" evidence="6">
    <location>
        <begin position="724"/>
        <end position="754"/>
    </location>
</feature>
<dbReference type="EC" id="1.97.1.12" evidence="1 2 3 4"/>
<dbReference type="EMBL" id="BA000039">
    <property type="protein sequence ID" value="BAC08282.1"/>
    <property type="status" value="ALT_INIT"/>
    <property type="molecule type" value="Genomic_DNA"/>
</dbReference>
<dbReference type="RefSeq" id="NP_681520.1">
    <property type="nucleotide sequence ID" value="NC_004113.1"/>
</dbReference>
<dbReference type="RefSeq" id="WP_164920748.1">
    <property type="nucleotide sequence ID" value="NC_004113.1"/>
</dbReference>
<dbReference type="PDB" id="1C51">
    <property type="method" value="X-ray"/>
    <property type="resolution" value="4.00 A"/>
</dbReference>
<dbReference type="PDB" id="1JB0">
    <property type="method" value="X-ray"/>
    <property type="resolution" value="2.50 A"/>
    <property type="chains" value="A=1-755"/>
</dbReference>
<dbReference type="PDB" id="2PPS">
    <property type="method" value="X-ray"/>
    <property type="resolution" value="4.00 A"/>
</dbReference>
<dbReference type="PDB" id="3PCQ">
    <property type="method" value="X-ray"/>
    <property type="resolution" value="8.98 A"/>
    <property type="chains" value="A=1-755"/>
</dbReference>
<dbReference type="PDB" id="4FE1">
    <property type="method" value="X-ray"/>
    <property type="resolution" value="4.92 A"/>
    <property type="chains" value="A=1-755"/>
</dbReference>
<dbReference type="PDB" id="5ZF0">
    <property type="method" value="X-ray"/>
    <property type="resolution" value="4.20 A"/>
    <property type="chains" value="A1/A2/A3/A4/A5/A6=1-755"/>
</dbReference>
<dbReference type="PDB" id="6LU1">
    <property type="method" value="EM"/>
    <property type="resolution" value="3.20 A"/>
    <property type="chains" value="A=1-755"/>
</dbReference>
<dbReference type="PDB" id="6PFY">
    <property type="method" value="X-ray"/>
    <property type="resolution" value="2.90 A"/>
    <property type="chains" value="A/G/Y=1-755"/>
</dbReference>
<dbReference type="PDB" id="6PGK">
    <property type="method" value="X-ray"/>
    <property type="resolution" value="2.90 A"/>
    <property type="chains" value="A/G/Y=1-755"/>
</dbReference>
<dbReference type="PDB" id="6TRA">
    <property type="method" value="EM"/>
    <property type="resolution" value="2.85 A"/>
    <property type="chains" value="A=1-755"/>
</dbReference>
<dbReference type="PDB" id="6TRC">
    <property type="method" value="EM"/>
    <property type="resolution" value="2.98 A"/>
    <property type="chains" value="1/A/a=1-755"/>
</dbReference>
<dbReference type="PDB" id="6TRD">
    <property type="method" value="EM"/>
    <property type="resolution" value="3.16 A"/>
    <property type="chains" value="1/A/a=1-755"/>
</dbReference>
<dbReference type="PDB" id="7BW2">
    <property type="method" value="X-ray"/>
    <property type="resolution" value="6.50 A"/>
    <property type="chains" value="A=1-755"/>
</dbReference>
<dbReference type="PDB" id="7FIX">
    <property type="method" value="EM"/>
    <property type="resolution" value="1.97 A"/>
    <property type="chains" value="A1/A2/A3=1-755"/>
</dbReference>
<dbReference type="PDB" id="7M75">
    <property type="method" value="X-ray"/>
    <property type="resolution" value="2.75 A"/>
    <property type="chains" value="A=1-755"/>
</dbReference>
<dbReference type="PDB" id="7M76">
    <property type="method" value="X-ray"/>
    <property type="resolution" value="3.00 A"/>
    <property type="chains" value="A=1-755"/>
</dbReference>
<dbReference type="PDB" id="7M78">
    <property type="method" value="X-ray"/>
    <property type="resolution" value="3.00 A"/>
    <property type="chains" value="A=1-755"/>
</dbReference>
<dbReference type="PDBsum" id="1C51"/>
<dbReference type="PDBsum" id="1JB0"/>
<dbReference type="PDBsum" id="2PPS"/>
<dbReference type="PDBsum" id="3PCQ"/>
<dbReference type="PDBsum" id="4FE1"/>
<dbReference type="PDBsum" id="5ZF0"/>
<dbReference type="PDBsum" id="6LU1"/>
<dbReference type="PDBsum" id="6PFY"/>
<dbReference type="PDBsum" id="6PGK"/>
<dbReference type="PDBsum" id="6TRA"/>
<dbReference type="PDBsum" id="6TRC"/>
<dbReference type="PDBsum" id="6TRD"/>
<dbReference type="PDBsum" id="7BW2"/>
<dbReference type="PDBsum" id="7FIX"/>
<dbReference type="PDBsum" id="7M75"/>
<dbReference type="PDBsum" id="7M76"/>
<dbReference type="PDBsum" id="7M78"/>
<dbReference type="EMDB" id="EMD-0977"/>
<dbReference type="EMDB" id="EMD-10557"/>
<dbReference type="EMDB" id="EMD-10558"/>
<dbReference type="EMDB" id="EMD-10559"/>
<dbReference type="EMDB" id="EMD-31605"/>
<dbReference type="SMR" id="P0A405"/>
<dbReference type="IntAct" id="P0A405">
    <property type="interactions" value="11"/>
</dbReference>
<dbReference type="STRING" id="197221.gene:10747321"/>
<dbReference type="EnsemblBacteria" id="BAC08282">
    <property type="protein sequence ID" value="BAC08282"/>
    <property type="gene ID" value="BAC08282"/>
</dbReference>
<dbReference type="KEGG" id="tel:tlr0731"/>
<dbReference type="PATRIC" id="fig|197221.4.peg.771"/>
<dbReference type="eggNOG" id="COG2885">
    <property type="taxonomic scope" value="Bacteria"/>
</dbReference>
<dbReference type="BRENDA" id="1.97.1.12">
    <property type="organism ID" value="7763"/>
</dbReference>
<dbReference type="EvolutionaryTrace" id="P0A405"/>
<dbReference type="Proteomes" id="UP000000440">
    <property type="component" value="Chromosome"/>
</dbReference>
<dbReference type="GO" id="GO:0009522">
    <property type="term" value="C:photosystem I"/>
    <property type="evidence" value="ECO:0007669"/>
    <property type="project" value="UniProtKB-KW"/>
</dbReference>
<dbReference type="GO" id="GO:0031676">
    <property type="term" value="C:plasma membrane-derived thylakoid membrane"/>
    <property type="evidence" value="ECO:0007669"/>
    <property type="project" value="UniProtKB-SubCell"/>
</dbReference>
<dbReference type="GO" id="GO:0051539">
    <property type="term" value="F:4 iron, 4 sulfur cluster binding"/>
    <property type="evidence" value="ECO:0007669"/>
    <property type="project" value="UniProtKB-KW"/>
</dbReference>
<dbReference type="GO" id="GO:0016168">
    <property type="term" value="F:chlorophyll binding"/>
    <property type="evidence" value="ECO:0007669"/>
    <property type="project" value="UniProtKB-KW"/>
</dbReference>
<dbReference type="GO" id="GO:0009055">
    <property type="term" value="F:electron transfer activity"/>
    <property type="evidence" value="ECO:0007669"/>
    <property type="project" value="UniProtKB-UniRule"/>
</dbReference>
<dbReference type="GO" id="GO:0000287">
    <property type="term" value="F:magnesium ion binding"/>
    <property type="evidence" value="ECO:0007669"/>
    <property type="project" value="UniProtKB-UniRule"/>
</dbReference>
<dbReference type="GO" id="GO:0016491">
    <property type="term" value="F:oxidoreductase activity"/>
    <property type="evidence" value="ECO:0007669"/>
    <property type="project" value="UniProtKB-KW"/>
</dbReference>
<dbReference type="GO" id="GO:0015979">
    <property type="term" value="P:photosynthesis"/>
    <property type="evidence" value="ECO:0007669"/>
    <property type="project" value="UniProtKB-UniRule"/>
</dbReference>
<dbReference type="FunFam" id="1.20.1130.10:FF:000001">
    <property type="entry name" value="Photosystem I P700 chlorophyll a apoprotein A2"/>
    <property type="match status" value="1"/>
</dbReference>
<dbReference type="Gene3D" id="1.20.1130.10">
    <property type="entry name" value="Photosystem I PsaA/PsaB"/>
    <property type="match status" value="1"/>
</dbReference>
<dbReference type="HAMAP" id="MF_00458">
    <property type="entry name" value="PSI_PsaA"/>
    <property type="match status" value="1"/>
</dbReference>
<dbReference type="InterPro" id="IPR006243">
    <property type="entry name" value="PSI_PsaA"/>
</dbReference>
<dbReference type="InterPro" id="IPR001280">
    <property type="entry name" value="PSI_PsaA/B"/>
</dbReference>
<dbReference type="InterPro" id="IPR020586">
    <property type="entry name" value="PSI_PsaA/B_CS"/>
</dbReference>
<dbReference type="InterPro" id="IPR036408">
    <property type="entry name" value="PSI_PsaA/B_sf"/>
</dbReference>
<dbReference type="NCBIfam" id="TIGR01335">
    <property type="entry name" value="psaA"/>
    <property type="match status" value="1"/>
</dbReference>
<dbReference type="PANTHER" id="PTHR30128">
    <property type="entry name" value="OUTER MEMBRANE PROTEIN, OMPA-RELATED"/>
    <property type="match status" value="1"/>
</dbReference>
<dbReference type="PANTHER" id="PTHR30128:SF19">
    <property type="entry name" value="PHOTOSYSTEM I P700 CHLOROPHYLL A APOPROTEIN A1-RELATED"/>
    <property type="match status" value="1"/>
</dbReference>
<dbReference type="Pfam" id="PF00223">
    <property type="entry name" value="PsaA_PsaB"/>
    <property type="match status" value="1"/>
</dbReference>
<dbReference type="PIRSF" id="PIRSF002905">
    <property type="entry name" value="PSI_A"/>
    <property type="match status" value="1"/>
</dbReference>
<dbReference type="PRINTS" id="PR00257">
    <property type="entry name" value="PHOTSYSPSAAB"/>
</dbReference>
<dbReference type="SUPFAM" id="SSF81558">
    <property type="entry name" value="Photosystem I subunits PsaA/PsaB"/>
    <property type="match status" value="1"/>
</dbReference>
<dbReference type="PROSITE" id="PS00419">
    <property type="entry name" value="PHOTOSYSTEM_I_PSAAB"/>
    <property type="match status" value="1"/>
</dbReference>
<keyword id="KW-0002">3D-structure</keyword>
<keyword id="KW-0004">4Fe-4S</keyword>
<keyword id="KW-0148">Chlorophyll</keyword>
<keyword id="KW-0157">Chromophore</keyword>
<keyword id="KW-0249">Electron transport</keyword>
<keyword id="KW-0408">Iron</keyword>
<keyword id="KW-0411">Iron-sulfur</keyword>
<keyword id="KW-0460">Magnesium</keyword>
<keyword id="KW-0472">Membrane</keyword>
<keyword id="KW-0479">Metal-binding</keyword>
<keyword id="KW-0560">Oxidoreductase</keyword>
<keyword id="KW-0602">Photosynthesis</keyword>
<keyword id="KW-0603">Photosystem I</keyword>
<keyword id="KW-1185">Reference proteome</keyword>
<keyword id="KW-0793">Thylakoid</keyword>
<keyword id="KW-0812">Transmembrane</keyword>
<keyword id="KW-1133">Transmembrane helix</keyword>
<keyword id="KW-0813">Transport</keyword>
<evidence type="ECO:0000269" key="1">
    <source>
    </source>
</evidence>
<evidence type="ECO:0000269" key="2">
    <source>
    </source>
</evidence>
<evidence type="ECO:0000269" key="3">
    <source>
    </source>
</evidence>
<evidence type="ECO:0000269" key="4">
    <source>
    </source>
</evidence>
<evidence type="ECO:0000305" key="5"/>
<evidence type="ECO:0007829" key="6">
    <source>
        <dbReference type="PDB" id="1JB0"/>
    </source>
</evidence>
<evidence type="ECO:0007829" key="7">
    <source>
        <dbReference type="PDB" id="6PGK"/>
    </source>
</evidence>
<evidence type="ECO:0007829" key="8">
    <source>
        <dbReference type="PDB" id="6TRA"/>
    </source>
</evidence>
<evidence type="ECO:0007829" key="9">
    <source>
        <dbReference type="PDB" id="6TRC"/>
    </source>
</evidence>
<evidence type="ECO:0007829" key="10">
    <source>
        <dbReference type="PDB" id="6TRD"/>
    </source>
</evidence>
<evidence type="ECO:0007829" key="11">
    <source>
        <dbReference type="PDB" id="7M75"/>
    </source>
</evidence>
<evidence type="ECO:0007829" key="12">
    <source>
        <dbReference type="PDB" id="7M76"/>
    </source>
</evidence>
<accession>P0A405</accession>
<accession>P25896</accession>
<proteinExistence type="evidence at protein level"/>
<name>PSAA_THEVB</name>
<organism>
    <name type="scientific">Thermosynechococcus vestitus (strain NIES-2133 / IAM M-273 / BP-1)</name>
    <dbReference type="NCBI Taxonomy" id="197221"/>
    <lineage>
        <taxon>Bacteria</taxon>
        <taxon>Bacillati</taxon>
        <taxon>Cyanobacteriota</taxon>
        <taxon>Cyanophyceae</taxon>
        <taxon>Acaryochloridales</taxon>
        <taxon>Thermosynechococcaceae</taxon>
        <taxon>Thermosynechococcus</taxon>
    </lineage>
</organism>
<reference key="1">
    <citation type="journal article" date="2002" name="DNA Res.">
        <title>Complete genome structure of the thermophilic cyanobacterium Thermosynechococcus elongatus BP-1.</title>
        <authorList>
            <person name="Nakamura Y."/>
            <person name="Kaneko T."/>
            <person name="Sato S."/>
            <person name="Ikeuchi M."/>
            <person name="Katoh H."/>
            <person name="Sasamoto S."/>
            <person name="Watanabe A."/>
            <person name="Iriguchi M."/>
            <person name="Kawashima K."/>
            <person name="Kimura T."/>
            <person name="Kishida Y."/>
            <person name="Kiyokawa C."/>
            <person name="Kohara M."/>
            <person name="Matsumoto M."/>
            <person name="Matsuno A."/>
            <person name="Nakazaki N."/>
            <person name="Shimpo S."/>
            <person name="Sugimoto M."/>
            <person name="Takeuchi C."/>
            <person name="Yamada M."/>
            <person name="Tabata S."/>
        </authorList>
    </citation>
    <scope>NUCLEOTIDE SEQUENCE [LARGE SCALE GENOMIC DNA]</scope>
    <source>
        <strain>NIES-2133 / IAM M-273 / BP-1</strain>
    </source>
</reference>
<reference key="2">
    <citation type="journal article" date="2003" name="Eur. J. Biochem.">
        <title>Reversed-phase HPLC determination of chlorophyll a' and phylloquinone in photosystem I of oxygenic photosynthetic organisms.</title>
        <authorList>
            <person name="Nakamura A."/>
            <person name="Akai M."/>
            <person name="Yoshida E."/>
            <person name="Taki T."/>
            <person name="Watanabe T."/>
        </authorList>
    </citation>
    <scope>PRESENCE OF CHLOROPHYLL A' IN PSI</scope>
</reference>
<reference key="3">
    <citation type="journal article" date="2001" name="Biochim. Biophys. Acta">
        <title>Structure of photosystem I.</title>
        <authorList>
            <person name="Fromme P."/>
            <person name="Jordan P."/>
            <person name="Krauss N."/>
        </authorList>
    </citation>
    <scope>REVIEW</scope>
</reference>
<reference key="4">
    <citation type="journal article" date="1996" name="Nat. Struct. Biol.">
        <title>Photosystem I at 4-A resolution represents the first structural model of a joint photosynthetic reaction centre and core antenna system.</title>
        <authorList>
            <person name="Krauss N."/>
            <person name="Schubert W.-D."/>
            <person name="Klukas O."/>
            <person name="Fromme P."/>
            <person name="Witt H.T."/>
            <person name="Saenger W."/>
        </authorList>
    </citation>
    <scope>X-RAY CRYSTALLOGRAPHY (4.0 ANGSTROMS)</scope>
    <scope>FUNCTION</scope>
    <scope>CATALYTIC ACTIVITY</scope>
    <scope>COFACTOR</scope>
    <scope>SUBUNIT</scope>
    <scope>SUBCELLULAR LOCATION</scope>
</reference>
<reference key="5">
    <citation type="journal article" date="1999" name="J. Biol. Chem.">
        <title>Photosystem I, an improved model of the stromal subunits PsaC, PsaD, and PsaE.</title>
        <authorList>
            <person name="Klukas O."/>
            <person name="Schubert W.-D."/>
            <person name="Jordan P."/>
            <person name="Krauss N."/>
            <person name="Fromme P."/>
            <person name="Witt H.T."/>
            <person name="Saenger W."/>
        </authorList>
    </citation>
    <scope>X-RAY CRYSTALLOGRAPHY (4.0 ANGSTROMS)</scope>
    <scope>FUNCTION</scope>
    <scope>CATALYTIC ACTIVITY</scope>
    <scope>COFACTOR</scope>
    <scope>SUBUNIT</scope>
    <scope>SUBCELLULAR LOCATION</scope>
</reference>
<reference key="6">
    <citation type="journal article" date="1999" name="J. Biol. Chem.">
        <title>Localization of two phylloquinones, QK and QK', in an improved electron density map of photosystem I at 4-A resolution.</title>
        <authorList>
            <person name="Klukas O."/>
            <person name="Schubert W.-D."/>
            <person name="Jordan P."/>
            <person name="Krauss N."/>
            <person name="Fromme P."/>
            <person name="Witt H.T."/>
            <person name="Saenger W."/>
        </authorList>
    </citation>
    <scope>X-RAY CRYSTALLOGRAPHY (4.0 ANGSTROMS)</scope>
    <scope>FUNCTION</scope>
    <scope>CATALYTIC ACTIVITY</scope>
    <scope>COFACTOR</scope>
    <scope>SUBUNIT</scope>
    <scope>SUBCELLULAR LOCATION</scope>
</reference>
<reference key="7">
    <citation type="journal article" date="2001" name="Nature">
        <title>Three-dimensional structure of cyanobacterial photosystem I at 2.5 A resolution.</title>
        <authorList>
            <person name="Jordan P."/>
            <person name="Fromme P."/>
            <person name="Witt H.T."/>
            <person name="Klukas O."/>
            <person name="Saenger W."/>
            <person name="Krauss N."/>
        </authorList>
    </citation>
    <scope>X-RAY CRYSTALLOGRAPHY (2.5 ANGSTROMS)</scope>
    <scope>FUNCTION</scope>
    <scope>CATALYTIC ACTIVITY</scope>
    <scope>COFACTOR</scope>
    <scope>SUBUNIT</scope>
    <scope>SUBCELLULAR LOCATION</scope>
</reference>
<protein>
    <recommendedName>
        <fullName>Photosystem I P700 chlorophyll a apoprotein A1</fullName>
        <ecNumber evidence="1 2 3 4">1.97.1.12</ecNumber>
    </recommendedName>
    <alternativeName>
        <fullName>PsaA</fullName>
    </alternativeName>
</protein>